<organism>
    <name type="scientific">Methanococcus maripaludis (strain C7 / ATCC BAA-1331)</name>
    <dbReference type="NCBI Taxonomy" id="426368"/>
    <lineage>
        <taxon>Archaea</taxon>
        <taxon>Methanobacteriati</taxon>
        <taxon>Methanobacteriota</taxon>
        <taxon>Methanomada group</taxon>
        <taxon>Methanococci</taxon>
        <taxon>Methanococcales</taxon>
        <taxon>Methanococcaceae</taxon>
        <taxon>Methanococcus</taxon>
    </lineage>
</organism>
<accession>A6VIS4</accession>
<reference key="1">
    <citation type="submission" date="2007-06" db="EMBL/GenBank/DDBJ databases">
        <title>Complete sequence of Methanococcus maripaludis C7.</title>
        <authorList>
            <consortium name="US DOE Joint Genome Institute"/>
            <person name="Copeland A."/>
            <person name="Lucas S."/>
            <person name="Lapidus A."/>
            <person name="Barry K."/>
            <person name="Glavina del Rio T."/>
            <person name="Dalin E."/>
            <person name="Tice H."/>
            <person name="Pitluck S."/>
            <person name="Clum A."/>
            <person name="Schmutz J."/>
            <person name="Larimer F."/>
            <person name="Land M."/>
            <person name="Hauser L."/>
            <person name="Kyrpides N."/>
            <person name="Anderson I."/>
            <person name="Sieprawska-Lupa M."/>
            <person name="Whitman W.B."/>
            <person name="Richardson P."/>
        </authorList>
    </citation>
    <scope>NUCLEOTIDE SEQUENCE [LARGE SCALE GENOMIC DNA]</scope>
    <source>
        <strain>C7 / ATCC BAA-1331</strain>
    </source>
</reference>
<feature type="chain" id="PRO_1000008274" description="Probable translation initiation factor IF-2">
    <location>
        <begin position="1"/>
        <end position="598"/>
    </location>
</feature>
<feature type="domain" description="tr-type G">
    <location>
        <begin position="3"/>
        <end position="225"/>
    </location>
</feature>
<feature type="region of interest" description="G1" evidence="1">
    <location>
        <begin position="12"/>
        <end position="19"/>
    </location>
</feature>
<feature type="region of interest" description="G2" evidence="1">
    <location>
        <begin position="37"/>
        <end position="41"/>
    </location>
</feature>
<feature type="region of interest" description="G3" evidence="1">
    <location>
        <begin position="76"/>
        <end position="79"/>
    </location>
</feature>
<feature type="region of interest" description="G4" evidence="1">
    <location>
        <begin position="130"/>
        <end position="133"/>
    </location>
</feature>
<feature type="region of interest" description="G5" evidence="1">
    <location>
        <begin position="200"/>
        <end position="202"/>
    </location>
</feature>
<feature type="binding site" evidence="2">
    <location>
        <begin position="12"/>
        <end position="19"/>
    </location>
    <ligand>
        <name>GTP</name>
        <dbReference type="ChEBI" id="CHEBI:37565"/>
    </ligand>
</feature>
<feature type="binding site" evidence="2">
    <location>
        <begin position="76"/>
        <end position="80"/>
    </location>
    <ligand>
        <name>GTP</name>
        <dbReference type="ChEBI" id="CHEBI:37565"/>
    </ligand>
</feature>
<feature type="binding site" evidence="2">
    <location>
        <begin position="130"/>
        <end position="133"/>
    </location>
    <ligand>
        <name>GTP</name>
        <dbReference type="ChEBI" id="CHEBI:37565"/>
    </ligand>
</feature>
<sequence length="598" mass="66259">MALRCPIVSVLGHVDHGKTSLLDKIRRTRVTQREAGGITQHIGASEIPINTIKKVSKDLLGLFKADLSIPGILVIDTPGHEAFTSLRKRGGALADIAILVVDINEGFKPQTIEAINILKQCKTPFVVAANKVDRIPGWNSSEGPFILNFNEKNQHPNAMTEFEIRLYENVIKHLNELGFDADLFSRVKDTTKTINVVPVSAMTGEGIPDLLVIISGLAQKFLEQKLALNVEGYAKGTVLELKEEKGLGKTIDAIIYDGIAKTGDFLVVGNPDGVLVTKIKALLKPKELDEMRDPKDKFKPSKQISAATGVKISAPDLDNVIAGSPLRIVPKDQVDAAKEEVLQEVEEFTILTDDEGIIIKADTMGSLEALANELRKVKAKIKKAEVGDISKKEVIEASSYASTNPLNGLIISFNTKVLADAKVEIEKSDVKLLEGKIIYKLVEEYEDWIKEMEELLKSDEINRLTKPAMIKILPNCIFRQKEPAVCGVEVLYGTLKIGSPIMSEDGKKLGYVKEMRDNQQENIKEAKVGMQVPVSIDGNIVLSRNAKENDILYVEVPEPEARKLHHEFKDELRGDEKEALSRYMELKQKIENNIFWGM</sequence>
<dbReference type="EMBL" id="CP000745">
    <property type="protein sequence ID" value="ABR66350.1"/>
    <property type="molecule type" value="Genomic_DNA"/>
</dbReference>
<dbReference type="SMR" id="A6VIS4"/>
<dbReference type="STRING" id="426368.MmarC7_1287"/>
<dbReference type="KEGG" id="mmz:MmarC7_1287"/>
<dbReference type="eggNOG" id="arCOG01560">
    <property type="taxonomic scope" value="Archaea"/>
</dbReference>
<dbReference type="HOGENOM" id="CLU_002656_3_3_2"/>
<dbReference type="OrthoDB" id="30957at2157"/>
<dbReference type="GO" id="GO:0005737">
    <property type="term" value="C:cytoplasm"/>
    <property type="evidence" value="ECO:0007669"/>
    <property type="project" value="TreeGrafter"/>
</dbReference>
<dbReference type="GO" id="GO:0005525">
    <property type="term" value="F:GTP binding"/>
    <property type="evidence" value="ECO:0007669"/>
    <property type="project" value="UniProtKB-KW"/>
</dbReference>
<dbReference type="GO" id="GO:0003924">
    <property type="term" value="F:GTPase activity"/>
    <property type="evidence" value="ECO:0007669"/>
    <property type="project" value="UniProtKB-UniRule"/>
</dbReference>
<dbReference type="GO" id="GO:0003743">
    <property type="term" value="F:translation initiation factor activity"/>
    <property type="evidence" value="ECO:0007669"/>
    <property type="project" value="UniProtKB-UniRule"/>
</dbReference>
<dbReference type="CDD" id="cd03703">
    <property type="entry name" value="aeIF5B_II"/>
    <property type="match status" value="1"/>
</dbReference>
<dbReference type="CDD" id="cd16266">
    <property type="entry name" value="IF2_aeIF5B_IV"/>
    <property type="match status" value="1"/>
</dbReference>
<dbReference type="CDD" id="cd01887">
    <property type="entry name" value="IF2_eIF5B"/>
    <property type="match status" value="1"/>
</dbReference>
<dbReference type="FunFam" id="3.40.50.300:FF:000112">
    <property type="entry name" value="Eukaryotic translation initiation factor 5B"/>
    <property type="match status" value="1"/>
</dbReference>
<dbReference type="FunFam" id="3.40.50.10050:FF:000001">
    <property type="entry name" value="Translation initiation factor IF-2"/>
    <property type="match status" value="1"/>
</dbReference>
<dbReference type="Gene3D" id="3.40.50.300">
    <property type="entry name" value="P-loop containing nucleotide triphosphate hydrolases"/>
    <property type="match status" value="1"/>
</dbReference>
<dbReference type="Gene3D" id="2.40.30.10">
    <property type="entry name" value="Translation factors"/>
    <property type="match status" value="2"/>
</dbReference>
<dbReference type="Gene3D" id="3.40.50.10050">
    <property type="entry name" value="Translation initiation factor IF- 2, domain 3"/>
    <property type="match status" value="1"/>
</dbReference>
<dbReference type="HAMAP" id="MF_00100_A">
    <property type="entry name" value="IF_2_A"/>
    <property type="match status" value="1"/>
</dbReference>
<dbReference type="InterPro" id="IPR029459">
    <property type="entry name" value="EFTU-type"/>
</dbReference>
<dbReference type="InterPro" id="IPR027417">
    <property type="entry name" value="P-loop_NTPase"/>
</dbReference>
<dbReference type="InterPro" id="IPR005225">
    <property type="entry name" value="Small_GTP-bd"/>
</dbReference>
<dbReference type="InterPro" id="IPR000795">
    <property type="entry name" value="T_Tr_GTP-bd_dom"/>
</dbReference>
<dbReference type="InterPro" id="IPR004544">
    <property type="entry name" value="TF_aIF-2_arc"/>
</dbReference>
<dbReference type="InterPro" id="IPR015760">
    <property type="entry name" value="TIF_IF2"/>
</dbReference>
<dbReference type="InterPro" id="IPR023115">
    <property type="entry name" value="TIF_IF2_dom3"/>
</dbReference>
<dbReference type="InterPro" id="IPR036925">
    <property type="entry name" value="TIF_IF2_dom3_sf"/>
</dbReference>
<dbReference type="InterPro" id="IPR009000">
    <property type="entry name" value="Transl_B-barrel_sf"/>
</dbReference>
<dbReference type="NCBIfam" id="TIGR00491">
    <property type="entry name" value="aIF-2"/>
    <property type="match status" value="1"/>
</dbReference>
<dbReference type="NCBIfam" id="NF003078">
    <property type="entry name" value="PRK04004.1"/>
    <property type="match status" value="1"/>
</dbReference>
<dbReference type="NCBIfam" id="NF011418">
    <property type="entry name" value="PRK14845.1"/>
    <property type="match status" value="1"/>
</dbReference>
<dbReference type="NCBIfam" id="TIGR00231">
    <property type="entry name" value="small_GTP"/>
    <property type="match status" value="1"/>
</dbReference>
<dbReference type="PANTHER" id="PTHR43381:SF4">
    <property type="entry name" value="EUKARYOTIC TRANSLATION INITIATION FACTOR 5B"/>
    <property type="match status" value="1"/>
</dbReference>
<dbReference type="PANTHER" id="PTHR43381">
    <property type="entry name" value="TRANSLATION INITIATION FACTOR IF-2-RELATED"/>
    <property type="match status" value="1"/>
</dbReference>
<dbReference type="Pfam" id="PF00009">
    <property type="entry name" value="GTP_EFTU"/>
    <property type="match status" value="1"/>
</dbReference>
<dbReference type="Pfam" id="PF14578">
    <property type="entry name" value="GTP_EFTU_D4"/>
    <property type="match status" value="1"/>
</dbReference>
<dbReference type="Pfam" id="PF11987">
    <property type="entry name" value="IF-2"/>
    <property type="match status" value="1"/>
</dbReference>
<dbReference type="PRINTS" id="PR00315">
    <property type="entry name" value="ELONGATNFCT"/>
</dbReference>
<dbReference type="SUPFAM" id="SSF52156">
    <property type="entry name" value="Initiation factor IF2/eIF5b, domain 3"/>
    <property type="match status" value="1"/>
</dbReference>
<dbReference type="SUPFAM" id="SSF52540">
    <property type="entry name" value="P-loop containing nucleoside triphosphate hydrolases"/>
    <property type="match status" value="1"/>
</dbReference>
<dbReference type="SUPFAM" id="SSF50447">
    <property type="entry name" value="Translation proteins"/>
    <property type="match status" value="1"/>
</dbReference>
<dbReference type="PROSITE" id="PS51722">
    <property type="entry name" value="G_TR_2"/>
    <property type="match status" value="1"/>
</dbReference>
<protein>
    <recommendedName>
        <fullName evidence="2">Probable translation initiation factor IF-2</fullName>
    </recommendedName>
</protein>
<name>IF2P_METM7</name>
<keyword id="KW-0342">GTP-binding</keyword>
<keyword id="KW-0396">Initiation factor</keyword>
<keyword id="KW-0547">Nucleotide-binding</keyword>
<keyword id="KW-0648">Protein biosynthesis</keyword>
<gene>
    <name evidence="2" type="primary">infB</name>
    <name type="ordered locus">MmarC7_1287</name>
</gene>
<proteinExistence type="inferred from homology"/>
<comment type="function">
    <text evidence="2">Function in general translation initiation by promoting the binding of the formylmethionine-tRNA to ribosomes. Seems to function along with eIF-2.</text>
</comment>
<comment type="similarity">
    <text evidence="2">Belongs to the TRAFAC class translation factor GTPase superfamily. Classic translation factor GTPase family. IF-2 subfamily.</text>
</comment>
<evidence type="ECO:0000250" key="1"/>
<evidence type="ECO:0000255" key="2">
    <source>
        <dbReference type="HAMAP-Rule" id="MF_00100"/>
    </source>
</evidence>